<reference key="1">
    <citation type="journal article" date="2004" name="Proc. Natl. Acad. Sci. U.S.A.">
        <title>Insights into the evolution of Yersinia pestis through whole-genome comparison with Yersinia pseudotuberculosis.</title>
        <authorList>
            <person name="Chain P.S.G."/>
            <person name="Carniel E."/>
            <person name="Larimer F.W."/>
            <person name="Lamerdin J."/>
            <person name="Stoutland P.O."/>
            <person name="Regala W.M."/>
            <person name="Georgescu A.M."/>
            <person name="Vergez L.M."/>
            <person name="Land M.L."/>
            <person name="Motin V.L."/>
            <person name="Brubaker R.R."/>
            <person name="Fowler J."/>
            <person name="Hinnebusch J."/>
            <person name="Marceau M."/>
            <person name="Medigue C."/>
            <person name="Simonet M."/>
            <person name="Chenal-Francisque V."/>
            <person name="Souza B."/>
            <person name="Dacheux D."/>
            <person name="Elliott J.M."/>
            <person name="Derbise A."/>
            <person name="Hauser L.J."/>
            <person name="Garcia E."/>
        </authorList>
    </citation>
    <scope>NUCLEOTIDE SEQUENCE [LARGE SCALE GENOMIC DNA]</scope>
    <source>
        <strain>IP32953</strain>
    </source>
</reference>
<comment type="function">
    <text evidence="1">Catalyzes the phosphorylation of autoinducer-2 (AI-2) to phospho-AI-2, which subsequently inactivates the transcriptional regulator LsrR and leads to the transcription of the lsr operon. Phosphorylates the ring-open form of (S)-4,5-dihydroxypentane-2,3-dione (DPD), which is the precursor to all AI-2 signaling molecules, at the C5 position.</text>
</comment>
<comment type="catalytic activity">
    <reaction evidence="1">
        <text>(S)-4,5-dihydroxypentane-2,3-dione + ATP = (2S)-2-hydroxy-3,4-dioxopentyl phosphate + ADP + H(+)</text>
        <dbReference type="Rhea" id="RHEA:15377"/>
        <dbReference type="ChEBI" id="CHEBI:15378"/>
        <dbReference type="ChEBI" id="CHEBI:29484"/>
        <dbReference type="ChEBI" id="CHEBI:30616"/>
        <dbReference type="ChEBI" id="CHEBI:71677"/>
        <dbReference type="ChEBI" id="CHEBI:456216"/>
        <dbReference type="EC" id="2.7.1.189"/>
    </reaction>
</comment>
<comment type="subcellular location">
    <subcellularLocation>
        <location evidence="1">Cytoplasm</location>
    </subcellularLocation>
</comment>
<comment type="similarity">
    <text evidence="1">Belongs to the FGGY kinase family.</text>
</comment>
<feature type="chain" id="PRO_0000351606" description="Autoinducer-2 kinase">
    <location>
        <begin position="1"/>
        <end position="530"/>
    </location>
</feature>
<name>LSRK_YERPS</name>
<organism>
    <name type="scientific">Yersinia pseudotuberculosis serotype I (strain IP32953)</name>
    <dbReference type="NCBI Taxonomy" id="273123"/>
    <lineage>
        <taxon>Bacteria</taxon>
        <taxon>Pseudomonadati</taxon>
        <taxon>Pseudomonadota</taxon>
        <taxon>Gammaproteobacteria</taxon>
        <taxon>Enterobacterales</taxon>
        <taxon>Yersiniaceae</taxon>
        <taxon>Yersinia</taxon>
    </lineage>
</organism>
<accession>Q66EY7</accession>
<gene>
    <name evidence="1" type="primary">lsrK</name>
    <name type="ordered locus">YPTB0554</name>
</gene>
<protein>
    <recommendedName>
        <fullName evidence="1">Autoinducer-2 kinase</fullName>
        <shortName evidence="1">AI-2 kinase</shortName>
        <ecNumber evidence="1">2.7.1.189</ecNumber>
    </recommendedName>
</protein>
<evidence type="ECO:0000255" key="1">
    <source>
        <dbReference type="HAMAP-Rule" id="MF_02053"/>
    </source>
</evidence>
<proteinExistence type="inferred from homology"/>
<sequence length="530" mass="56995">MSQLDTTTPSGDYLMALDAGTGSVRAVIFDLNGNQIAAGQAEWLHLPVPDVPGSMEFDLTTNWQLTCQCIRQALHLAKLPASAIRAVAACSMREGIVLYDRSGTPIWACANVDARASREVSELKELHNNGFELEVYQCSGQTLALSAMPRLLWLAHYRPDIYRQAGTLTMISDWLANMLSGELAVDPSNAGTTGMLDLVTRNWQPNLLEMAGLRADILSPVKETGTLLGHVTAKAAQECGLLAGTPVVMGGGDVQLGCLGLGVVHAGQTAVLGGTFWQQVVNLPQPIIDPNMNTRINPHVIPGMVQAESISFFTGLTMRWFRDAFCAEEKLLAQRLGIDTYSLLEDMAARVPAGAYGVMPIFSDVMRFKSWYHAAPSFINLSLDPEKCNKATLFRALEENAAIVSACNLAQIAEFSGVKASSVVFAGGGAKGKLWSQILADVTGVPVKVPVVKEATALGCAIAAGVGVGLYEALDKTGERLVRWEREYIPNTEHKALYQAAKTNWQAVYTDQLGLVDCGLTTSLWKAPGL</sequence>
<dbReference type="EC" id="2.7.1.189" evidence="1"/>
<dbReference type="EMBL" id="BX936398">
    <property type="protein sequence ID" value="CAH19794.1"/>
    <property type="molecule type" value="Genomic_DNA"/>
</dbReference>
<dbReference type="RefSeq" id="WP_002230543.1">
    <property type="nucleotide sequence ID" value="NZ_CP009712.1"/>
</dbReference>
<dbReference type="SMR" id="Q66EY7"/>
<dbReference type="GeneID" id="96664058"/>
<dbReference type="KEGG" id="ypo:BZ17_2005"/>
<dbReference type="KEGG" id="yps:YPTB0554"/>
<dbReference type="PATRIC" id="fig|273123.14.peg.2130"/>
<dbReference type="Proteomes" id="UP000001011">
    <property type="component" value="Chromosome"/>
</dbReference>
<dbReference type="GO" id="GO:0005737">
    <property type="term" value="C:cytoplasm"/>
    <property type="evidence" value="ECO:0007669"/>
    <property type="project" value="UniProtKB-SubCell"/>
</dbReference>
<dbReference type="GO" id="GO:0071518">
    <property type="term" value="F:autoinducer-2 kinase activity"/>
    <property type="evidence" value="ECO:0007669"/>
    <property type="project" value="UniProtKB-UniRule"/>
</dbReference>
<dbReference type="GO" id="GO:0005975">
    <property type="term" value="P:carbohydrate metabolic process"/>
    <property type="evidence" value="ECO:0007669"/>
    <property type="project" value="InterPro"/>
</dbReference>
<dbReference type="GO" id="GO:0009372">
    <property type="term" value="P:quorum sensing"/>
    <property type="evidence" value="ECO:0007669"/>
    <property type="project" value="InterPro"/>
</dbReference>
<dbReference type="CDD" id="cd07775">
    <property type="entry name" value="ASKHA_NBD_FGGY_AI-2K"/>
    <property type="match status" value="1"/>
</dbReference>
<dbReference type="Gene3D" id="3.30.420.40">
    <property type="match status" value="2"/>
</dbReference>
<dbReference type="HAMAP" id="MF_02053">
    <property type="entry name" value="LsrK"/>
    <property type="match status" value="1"/>
</dbReference>
<dbReference type="InterPro" id="IPR033676">
    <property type="entry name" value="AI-2_kinase"/>
</dbReference>
<dbReference type="InterPro" id="IPR043129">
    <property type="entry name" value="ATPase_NBD"/>
</dbReference>
<dbReference type="InterPro" id="IPR000577">
    <property type="entry name" value="Carb_kinase_FGGY"/>
</dbReference>
<dbReference type="InterPro" id="IPR018485">
    <property type="entry name" value="FGGY_C"/>
</dbReference>
<dbReference type="InterPro" id="IPR050406">
    <property type="entry name" value="FGGY_Carb_Kinase"/>
</dbReference>
<dbReference type="InterPro" id="IPR018484">
    <property type="entry name" value="FGGY_N"/>
</dbReference>
<dbReference type="NCBIfam" id="NF008187">
    <property type="entry name" value="PRK10939.1"/>
    <property type="match status" value="1"/>
</dbReference>
<dbReference type="PANTHER" id="PTHR43095:SF1">
    <property type="entry name" value="AUTOINDUCER-2 KINASE"/>
    <property type="match status" value="1"/>
</dbReference>
<dbReference type="PANTHER" id="PTHR43095">
    <property type="entry name" value="SUGAR KINASE"/>
    <property type="match status" value="1"/>
</dbReference>
<dbReference type="Pfam" id="PF02782">
    <property type="entry name" value="FGGY_C"/>
    <property type="match status" value="1"/>
</dbReference>
<dbReference type="Pfam" id="PF00370">
    <property type="entry name" value="FGGY_N"/>
    <property type="match status" value="1"/>
</dbReference>
<dbReference type="PIRSF" id="PIRSF000538">
    <property type="entry name" value="GlpK"/>
    <property type="match status" value="1"/>
</dbReference>
<dbReference type="SUPFAM" id="SSF53067">
    <property type="entry name" value="Actin-like ATPase domain"/>
    <property type="match status" value="2"/>
</dbReference>
<keyword id="KW-0963">Cytoplasm</keyword>
<keyword id="KW-0418">Kinase</keyword>
<keyword id="KW-0808">Transferase</keyword>